<gene>
    <name type="primary">Txn</name>
    <name type="synonym">Txn1</name>
</gene>
<dbReference type="EMBL" id="X77585">
    <property type="protein sequence ID" value="CAA54688.1"/>
    <property type="molecule type" value="mRNA"/>
</dbReference>
<dbReference type="EMBL" id="D21859">
    <property type="protein sequence ID" value="BAA04881.1"/>
    <property type="molecule type" value="Genomic_DNA"/>
</dbReference>
<dbReference type="EMBL" id="AK007537">
    <property type="protein sequence ID" value="BAB25096.1"/>
    <property type="molecule type" value="mRNA"/>
</dbReference>
<dbReference type="EMBL" id="AK007790">
    <property type="protein sequence ID" value="BAB25256.1"/>
    <property type="molecule type" value="mRNA"/>
</dbReference>
<dbReference type="EMBL" id="BC010756">
    <property type="protein sequence ID" value="AAH10756.1"/>
    <property type="molecule type" value="mRNA"/>
</dbReference>
<dbReference type="EMBL" id="BC094415">
    <property type="protein sequence ID" value="AAH94415.1"/>
    <property type="molecule type" value="mRNA"/>
</dbReference>
<dbReference type="CCDS" id="CCDS18207.1"/>
<dbReference type="PIR" id="JC4068">
    <property type="entry name" value="S04107"/>
</dbReference>
<dbReference type="RefSeq" id="NP_035790.1">
    <property type="nucleotide sequence ID" value="NM_011660.3"/>
</dbReference>
<dbReference type="SMR" id="P10639"/>
<dbReference type="BioGRID" id="204389">
    <property type="interactions" value="38"/>
</dbReference>
<dbReference type="FunCoup" id="P10639">
    <property type="interactions" value="1766"/>
</dbReference>
<dbReference type="IntAct" id="P10639">
    <property type="interactions" value="3"/>
</dbReference>
<dbReference type="MINT" id="P10639"/>
<dbReference type="STRING" id="10090.ENSMUSP00000030051"/>
<dbReference type="GlyGen" id="P10639">
    <property type="glycosylation" value="1 site, 1 O-linked glycan (1 site)"/>
</dbReference>
<dbReference type="iPTMnet" id="P10639"/>
<dbReference type="PhosphoSitePlus" id="P10639"/>
<dbReference type="SwissPalm" id="P10639"/>
<dbReference type="CPTAC" id="non-CPTAC-3884"/>
<dbReference type="jPOST" id="P10639"/>
<dbReference type="PaxDb" id="10090-ENSMUSP00000030051"/>
<dbReference type="PeptideAtlas" id="P10639"/>
<dbReference type="ProteomicsDB" id="262978"/>
<dbReference type="Pumba" id="P10639"/>
<dbReference type="TopDownProteomics" id="P10639"/>
<dbReference type="Antibodypedia" id="3281">
    <property type="antibodies" value="842 antibodies from 40 providers"/>
</dbReference>
<dbReference type="DNASU" id="22166"/>
<dbReference type="Ensembl" id="ENSMUST00000030051.6">
    <property type="protein sequence ID" value="ENSMUSP00000030051.6"/>
    <property type="gene ID" value="ENSMUSG00000028367.6"/>
</dbReference>
<dbReference type="GeneID" id="22166"/>
<dbReference type="KEGG" id="mmu:22166"/>
<dbReference type="UCSC" id="uc008syp.1">
    <property type="organism name" value="mouse"/>
</dbReference>
<dbReference type="AGR" id="MGI:98874"/>
<dbReference type="CTD" id="22166"/>
<dbReference type="MGI" id="MGI:98874">
    <property type="gene designation" value="Txn1"/>
</dbReference>
<dbReference type="VEuPathDB" id="HostDB:ENSMUSG00000028367"/>
<dbReference type="eggNOG" id="KOG0907">
    <property type="taxonomic scope" value="Eukaryota"/>
</dbReference>
<dbReference type="GeneTree" id="ENSGT00940000154259"/>
<dbReference type="HOGENOM" id="CLU_090389_14_6_1"/>
<dbReference type="InParanoid" id="P10639"/>
<dbReference type="OMA" id="KQLWRQS"/>
<dbReference type="OrthoDB" id="2121326at2759"/>
<dbReference type="PhylomeDB" id="P10639"/>
<dbReference type="TreeFam" id="TF318932"/>
<dbReference type="Reactome" id="R-MMU-2559580">
    <property type="pathway name" value="Oxidative Stress Induced Senescence"/>
</dbReference>
<dbReference type="Reactome" id="R-MMU-3299685">
    <property type="pathway name" value="Detoxification of Reactive Oxygen Species"/>
</dbReference>
<dbReference type="Reactome" id="R-MMU-499943">
    <property type="pathway name" value="Interconversion of nucleotide di- and triphosphates"/>
</dbReference>
<dbReference type="Reactome" id="R-MMU-5628897">
    <property type="pathway name" value="TP53 Regulates Metabolic Genes"/>
</dbReference>
<dbReference type="Reactome" id="R-MMU-5676934">
    <property type="pathway name" value="Protein repair"/>
</dbReference>
<dbReference type="Reactome" id="R-MMU-844456">
    <property type="pathway name" value="The NLRP3 inflammasome"/>
</dbReference>
<dbReference type="BioGRID-ORCS" id="22166">
    <property type="hits" value="27 hits in 79 CRISPR screens"/>
</dbReference>
<dbReference type="ChiTaRS" id="Txn1">
    <property type="organism name" value="mouse"/>
</dbReference>
<dbReference type="PRO" id="PR:P10639"/>
<dbReference type="Proteomes" id="UP000000589">
    <property type="component" value="Chromosome 4"/>
</dbReference>
<dbReference type="RNAct" id="P10639">
    <property type="molecule type" value="protein"/>
</dbReference>
<dbReference type="Bgee" id="ENSMUSG00000028367">
    <property type="expression patterns" value="Expressed in jejunum and 71 other cell types or tissues"/>
</dbReference>
<dbReference type="GO" id="GO:0005737">
    <property type="term" value="C:cytoplasm"/>
    <property type="evidence" value="ECO:0000314"/>
    <property type="project" value="MGI"/>
</dbReference>
<dbReference type="GO" id="GO:0005829">
    <property type="term" value="C:cytosol"/>
    <property type="evidence" value="ECO:0000314"/>
    <property type="project" value="MGI"/>
</dbReference>
<dbReference type="GO" id="GO:0005576">
    <property type="term" value="C:extracellular region"/>
    <property type="evidence" value="ECO:0007669"/>
    <property type="project" value="UniProtKB-SubCell"/>
</dbReference>
<dbReference type="GO" id="GO:0005739">
    <property type="term" value="C:mitochondrion"/>
    <property type="evidence" value="ECO:0007005"/>
    <property type="project" value="MGI"/>
</dbReference>
<dbReference type="GO" id="GO:0005654">
    <property type="term" value="C:nucleoplasm"/>
    <property type="evidence" value="ECO:0007669"/>
    <property type="project" value="Ensembl"/>
</dbReference>
<dbReference type="GO" id="GO:0005634">
    <property type="term" value="C:nucleus"/>
    <property type="evidence" value="ECO:0000314"/>
    <property type="project" value="MGI"/>
</dbReference>
<dbReference type="GO" id="GO:0042803">
    <property type="term" value="F:protein homodimerization activity"/>
    <property type="evidence" value="ECO:0007669"/>
    <property type="project" value="Ensembl"/>
</dbReference>
<dbReference type="GO" id="GO:0047134">
    <property type="term" value="F:protein-disulfide reductase [NAD(P)H] activity"/>
    <property type="evidence" value="ECO:0007669"/>
    <property type="project" value="Ensembl"/>
</dbReference>
<dbReference type="GO" id="GO:0015035">
    <property type="term" value="F:protein-disulfide reductase activity"/>
    <property type="evidence" value="ECO:0000314"/>
    <property type="project" value="MGI"/>
</dbReference>
<dbReference type="GO" id="GO:0045454">
    <property type="term" value="P:cell redox homeostasis"/>
    <property type="evidence" value="ECO:0000314"/>
    <property type="project" value="MGI"/>
</dbReference>
<dbReference type="GO" id="GO:0061692">
    <property type="term" value="P:cellular detoxification of hydrogen peroxide"/>
    <property type="evidence" value="ECO:0007669"/>
    <property type="project" value="Ensembl"/>
</dbReference>
<dbReference type="GO" id="GO:0046826">
    <property type="term" value="P:negative regulation of protein export from nucleus"/>
    <property type="evidence" value="ECO:0000314"/>
    <property type="project" value="MGI"/>
</dbReference>
<dbReference type="GO" id="GO:0000122">
    <property type="term" value="P:negative regulation of transcription by RNA polymerase II"/>
    <property type="evidence" value="ECO:0000316"/>
    <property type="project" value="MGI"/>
</dbReference>
<dbReference type="GO" id="GO:0043388">
    <property type="term" value="P:positive regulation of DNA binding"/>
    <property type="evidence" value="ECO:0000250"/>
    <property type="project" value="UniProtKB"/>
</dbReference>
<dbReference type="GO" id="GO:0051897">
    <property type="term" value="P:positive regulation of phosphatidylinositol 3-kinase/protein kinase B signal transduction"/>
    <property type="evidence" value="ECO:0007669"/>
    <property type="project" value="Ensembl"/>
</dbReference>
<dbReference type="GO" id="GO:0071731">
    <property type="term" value="P:response to nitric oxide"/>
    <property type="evidence" value="ECO:0007669"/>
    <property type="project" value="Ensembl"/>
</dbReference>
<dbReference type="GO" id="GO:0009314">
    <property type="term" value="P:response to radiation"/>
    <property type="evidence" value="ECO:0000250"/>
    <property type="project" value="UniProtKB"/>
</dbReference>
<dbReference type="CDD" id="cd02947">
    <property type="entry name" value="TRX_family"/>
    <property type="match status" value="1"/>
</dbReference>
<dbReference type="FunFam" id="3.40.30.10:FF:000130">
    <property type="entry name" value="Thioredoxin"/>
    <property type="match status" value="1"/>
</dbReference>
<dbReference type="Gene3D" id="3.40.30.10">
    <property type="entry name" value="Glutaredoxin"/>
    <property type="match status" value="1"/>
</dbReference>
<dbReference type="InterPro" id="IPR005746">
    <property type="entry name" value="Thioredoxin"/>
</dbReference>
<dbReference type="InterPro" id="IPR036249">
    <property type="entry name" value="Thioredoxin-like_sf"/>
</dbReference>
<dbReference type="InterPro" id="IPR017937">
    <property type="entry name" value="Thioredoxin_CS"/>
</dbReference>
<dbReference type="InterPro" id="IPR013766">
    <property type="entry name" value="Thioredoxin_domain"/>
</dbReference>
<dbReference type="PANTHER" id="PTHR46115">
    <property type="entry name" value="THIOREDOXIN-LIKE PROTEIN 1"/>
    <property type="match status" value="1"/>
</dbReference>
<dbReference type="Pfam" id="PF00085">
    <property type="entry name" value="Thioredoxin"/>
    <property type="match status" value="1"/>
</dbReference>
<dbReference type="PIRSF" id="PIRSF000077">
    <property type="entry name" value="Thioredoxin"/>
    <property type="match status" value="1"/>
</dbReference>
<dbReference type="PRINTS" id="PR00421">
    <property type="entry name" value="THIOREDOXIN"/>
</dbReference>
<dbReference type="SUPFAM" id="SSF52833">
    <property type="entry name" value="Thioredoxin-like"/>
    <property type="match status" value="1"/>
</dbReference>
<dbReference type="PROSITE" id="PS00194">
    <property type="entry name" value="THIOREDOXIN_1"/>
    <property type="match status" value="1"/>
</dbReference>
<dbReference type="PROSITE" id="PS51352">
    <property type="entry name" value="THIOREDOXIN_2"/>
    <property type="match status" value="1"/>
</dbReference>
<comment type="function">
    <text evidence="1">Participates in various redox reactions through the reversible oxidation of its active center dithiol to a disulfide and catalyzes dithiol-disulfide exchange reactions (By similarity). Plays a role in the reversible S-nitrosylation of cysteine residues in target proteins, and thereby contributes to the response to intracellular nitric oxide. Nitrosylates the active site Cys of CASP3 in response to nitric oxide (NO), and thereby inhibits caspase-3 activity. Induces the FOS/JUN AP-1 DNA binding activity in ionizing radiation (IR) cells through its oxidation/reduction status and stimulates AP-1 transcriptional activity (By similarity).</text>
</comment>
<comment type="function">
    <text>ADF augments the expression of the interleukin-2 receptor TAC (IL2R/P55).</text>
</comment>
<comment type="subunit">
    <text evidence="1">Homodimer; disulfide-linked. Interacts with TXNIP through the redox-active site. Interacts with MAP3K5 and CASP3. Interacts with APEX1; the interaction stimulates the FOS/JUN AP-1 DNA-binding activity in a redox-dependent manner (By similarity).</text>
</comment>
<comment type="subcellular location">
    <subcellularLocation>
        <location evidence="2">Nucleus</location>
    </subcellularLocation>
    <subcellularLocation>
        <location evidence="2">Cytoplasm</location>
    </subcellularLocation>
    <subcellularLocation>
        <location evidence="2">Secreted</location>
    </subcellularLocation>
    <text evidence="2">Translocates from the cytoplasm into the nucleus after phorbol 12-myristate 13-acetate induction (PMA). Predominantly in the cytoplasm in non irradiated cells. Radiation induces translocation of TRX from the cytoplasm to the nucleus. Secreted by a leaderless secretory pathway.</text>
</comment>
<comment type="PTM">
    <text evidence="1">In the fully reduced protein, both Cys-69 and Cys-73 are nitrosylated in response to nitric oxide (NO). When two disulfide bonds are present in the protein, only Cys-73 is nitrosylated. Cys-73 can serve as donor for nitrosylation of target proteins (By similarity).</text>
</comment>
<comment type="similarity">
    <text evidence="4">Belongs to the thioredoxin family.</text>
</comment>
<proteinExistence type="evidence at protein level"/>
<evidence type="ECO:0000250" key="1"/>
<evidence type="ECO:0000250" key="2">
    <source>
        <dbReference type="UniProtKB" id="P10599"/>
    </source>
</evidence>
<evidence type="ECO:0000255" key="3">
    <source>
        <dbReference type="PROSITE-ProRule" id="PRU00691"/>
    </source>
</evidence>
<evidence type="ECO:0000305" key="4"/>
<evidence type="ECO:0007744" key="5">
    <source>
    </source>
</evidence>
<accession>P10639</accession>
<accession>Q52KC4</accession>
<accession>Q9D8R0</accession>
<feature type="chain" id="PRO_0000120007" description="Thioredoxin">
    <location>
        <begin position="1"/>
        <end position="105"/>
    </location>
</feature>
<feature type="domain" description="Thioredoxin" evidence="3">
    <location>
        <begin position="2"/>
        <end position="105"/>
    </location>
</feature>
<feature type="active site" description="Nucleophile" evidence="1">
    <location>
        <position position="32"/>
    </location>
</feature>
<feature type="active site" description="Nucleophile" evidence="1">
    <location>
        <position position="35"/>
    </location>
</feature>
<feature type="site" description="Deprotonates C-terminal active site Cys" evidence="1">
    <location>
        <position position="26"/>
    </location>
</feature>
<feature type="site" description="Contributes to redox potential value" evidence="1">
    <location>
        <position position="33"/>
    </location>
</feature>
<feature type="site" description="Contributes to redox potential value" evidence="1">
    <location>
        <position position="34"/>
    </location>
</feature>
<feature type="modified residue" description="N6-acetyllysine" evidence="2">
    <location>
        <position position="3"/>
    </location>
</feature>
<feature type="modified residue" description="N6-succinyllysine" evidence="5">
    <location>
        <position position="8"/>
    </location>
</feature>
<feature type="modified residue" description="N6-acetyllysine" evidence="5">
    <location>
        <position position="39"/>
    </location>
</feature>
<feature type="modified residue" description="S-nitrosocysteine" evidence="2">
    <location>
        <position position="62"/>
    </location>
</feature>
<feature type="modified residue" description="S-nitrosocysteine" evidence="2">
    <location>
        <position position="69"/>
    </location>
</feature>
<feature type="modified residue" description="S-nitrosocysteine; alternate" evidence="2">
    <location>
        <position position="73"/>
    </location>
</feature>
<feature type="modified residue" description="N6-acetyllysine; alternate" evidence="5">
    <location>
        <position position="94"/>
    </location>
</feature>
<feature type="modified residue" description="N6-succinyllysine; alternate" evidence="5">
    <location>
        <position position="94"/>
    </location>
</feature>
<feature type="disulfide bond" description="Redox-active" evidence="3">
    <location>
        <begin position="32"/>
        <end position="35"/>
    </location>
</feature>
<feature type="disulfide bond" description="Interchain; alternate" evidence="1">
    <location>
        <position position="73"/>
    </location>
</feature>
<feature type="sequence conflict" description="In Ref. 4; BAB25256." evidence="4" ref="4">
    <original>S</original>
    <variation>C</variation>
    <location>
        <position position="100"/>
    </location>
</feature>
<keyword id="KW-0007">Acetylation</keyword>
<keyword id="KW-0010">Activator</keyword>
<keyword id="KW-0963">Cytoplasm</keyword>
<keyword id="KW-1015">Disulfide bond</keyword>
<keyword id="KW-0249">Electron transport</keyword>
<keyword id="KW-0539">Nucleus</keyword>
<keyword id="KW-0676">Redox-active center</keyword>
<keyword id="KW-1185">Reference proteome</keyword>
<keyword id="KW-0702">S-nitrosylation</keyword>
<keyword id="KW-0964">Secreted</keyword>
<keyword id="KW-0804">Transcription</keyword>
<keyword id="KW-0805">Transcription regulation</keyword>
<keyword id="KW-0813">Transport</keyword>
<organism>
    <name type="scientific">Mus musculus</name>
    <name type="common">Mouse</name>
    <dbReference type="NCBI Taxonomy" id="10090"/>
    <lineage>
        <taxon>Eukaryota</taxon>
        <taxon>Metazoa</taxon>
        <taxon>Chordata</taxon>
        <taxon>Craniata</taxon>
        <taxon>Vertebrata</taxon>
        <taxon>Euteleostomi</taxon>
        <taxon>Mammalia</taxon>
        <taxon>Eutheria</taxon>
        <taxon>Euarchontoglires</taxon>
        <taxon>Glires</taxon>
        <taxon>Rodentia</taxon>
        <taxon>Myomorpha</taxon>
        <taxon>Muroidea</taxon>
        <taxon>Muridae</taxon>
        <taxon>Murinae</taxon>
        <taxon>Mus</taxon>
        <taxon>Mus</taxon>
    </lineage>
</organism>
<sequence>MVKLIESKEAFQEALAAAGDKLVVVDFSATWCGPCKMIKPFFHSLCDKYSNVVFLEVDVDDCQDVAADCEVKCMPTFQFYKKGQKVGEFSGANKEKLEASITEYA</sequence>
<name>THIO_MOUSE</name>
<reference key="1">
    <citation type="journal article" date="1989" name="EMBO J.">
        <title>ATL-derived factor (ADF), an IL-2 receptor/Tac inducer homologous to thioredoxin; possible involvement of dithiol-reduction in the IL-2 receptor induction.</title>
        <authorList>
            <person name="Tagaya Y."/>
            <person name="Maeda Y."/>
            <person name="Mitsui A."/>
            <person name="Kndo N."/>
            <person name="Matsui H."/>
            <person name="Hamuro J."/>
            <person name="Brown N."/>
            <person name="Arai K."/>
            <person name="Yokota T."/>
            <person name="Wakasugi H."/>
            <person name="Yodoi J."/>
        </authorList>
    </citation>
    <scope>NUCLEOTIDE SEQUENCE [MRNA]</scope>
</reference>
<reference key="2">
    <citation type="journal article" date="1994" name="EMBO J.">
        <authorList>
            <person name="Tagaya Y."/>
            <person name="Maeda Y."/>
            <person name="Mitsui A."/>
            <person name="Kndo N."/>
            <person name="Matsui H."/>
            <person name="Hamuro J."/>
            <person name="Brown N."/>
            <person name="Arai K."/>
            <person name="Yokota T."/>
            <person name="Wakasugi H."/>
            <person name="Yodoi J."/>
        </authorList>
    </citation>
    <scope>ERRATUM OF PUBMED:2785919</scope>
    <scope>SEQUENCE REVISION</scope>
</reference>
<reference key="3">
    <citation type="journal article" date="1995" name="Gene">
        <title>Structure of the mouse thioredoxin-encoding gene and its processed pseudogene.</title>
        <authorList>
            <person name="Matsui M."/>
            <person name="Taniguchi Y."/>
            <person name="Hirota K."/>
            <person name="Taketo M."/>
            <person name="Yodoi J."/>
        </authorList>
    </citation>
    <scope>NUCLEOTIDE SEQUENCE [GENOMIC DNA]</scope>
    <source>
        <strain>129/Sv</strain>
        <tissue>Liver</tissue>
    </source>
</reference>
<reference key="4">
    <citation type="journal article" date="2005" name="Science">
        <title>The transcriptional landscape of the mammalian genome.</title>
        <authorList>
            <person name="Carninci P."/>
            <person name="Kasukawa T."/>
            <person name="Katayama S."/>
            <person name="Gough J."/>
            <person name="Frith M.C."/>
            <person name="Maeda N."/>
            <person name="Oyama R."/>
            <person name="Ravasi T."/>
            <person name="Lenhard B."/>
            <person name="Wells C."/>
            <person name="Kodzius R."/>
            <person name="Shimokawa K."/>
            <person name="Bajic V.B."/>
            <person name="Brenner S.E."/>
            <person name="Batalov S."/>
            <person name="Forrest A.R."/>
            <person name="Zavolan M."/>
            <person name="Davis M.J."/>
            <person name="Wilming L.G."/>
            <person name="Aidinis V."/>
            <person name="Allen J.E."/>
            <person name="Ambesi-Impiombato A."/>
            <person name="Apweiler R."/>
            <person name="Aturaliya R.N."/>
            <person name="Bailey T.L."/>
            <person name="Bansal M."/>
            <person name="Baxter L."/>
            <person name="Beisel K.W."/>
            <person name="Bersano T."/>
            <person name="Bono H."/>
            <person name="Chalk A.M."/>
            <person name="Chiu K.P."/>
            <person name="Choudhary V."/>
            <person name="Christoffels A."/>
            <person name="Clutterbuck D.R."/>
            <person name="Crowe M.L."/>
            <person name="Dalla E."/>
            <person name="Dalrymple B.P."/>
            <person name="de Bono B."/>
            <person name="Della Gatta G."/>
            <person name="di Bernardo D."/>
            <person name="Down T."/>
            <person name="Engstrom P."/>
            <person name="Fagiolini M."/>
            <person name="Faulkner G."/>
            <person name="Fletcher C.F."/>
            <person name="Fukushima T."/>
            <person name="Furuno M."/>
            <person name="Futaki S."/>
            <person name="Gariboldi M."/>
            <person name="Georgii-Hemming P."/>
            <person name="Gingeras T.R."/>
            <person name="Gojobori T."/>
            <person name="Green R.E."/>
            <person name="Gustincich S."/>
            <person name="Harbers M."/>
            <person name="Hayashi Y."/>
            <person name="Hensch T.K."/>
            <person name="Hirokawa N."/>
            <person name="Hill D."/>
            <person name="Huminiecki L."/>
            <person name="Iacono M."/>
            <person name="Ikeo K."/>
            <person name="Iwama A."/>
            <person name="Ishikawa T."/>
            <person name="Jakt M."/>
            <person name="Kanapin A."/>
            <person name="Katoh M."/>
            <person name="Kawasawa Y."/>
            <person name="Kelso J."/>
            <person name="Kitamura H."/>
            <person name="Kitano H."/>
            <person name="Kollias G."/>
            <person name="Krishnan S.P."/>
            <person name="Kruger A."/>
            <person name="Kummerfeld S.K."/>
            <person name="Kurochkin I.V."/>
            <person name="Lareau L.F."/>
            <person name="Lazarevic D."/>
            <person name="Lipovich L."/>
            <person name="Liu J."/>
            <person name="Liuni S."/>
            <person name="McWilliam S."/>
            <person name="Madan Babu M."/>
            <person name="Madera M."/>
            <person name="Marchionni L."/>
            <person name="Matsuda H."/>
            <person name="Matsuzawa S."/>
            <person name="Miki H."/>
            <person name="Mignone F."/>
            <person name="Miyake S."/>
            <person name="Morris K."/>
            <person name="Mottagui-Tabar S."/>
            <person name="Mulder N."/>
            <person name="Nakano N."/>
            <person name="Nakauchi H."/>
            <person name="Ng P."/>
            <person name="Nilsson R."/>
            <person name="Nishiguchi S."/>
            <person name="Nishikawa S."/>
            <person name="Nori F."/>
            <person name="Ohara O."/>
            <person name="Okazaki Y."/>
            <person name="Orlando V."/>
            <person name="Pang K.C."/>
            <person name="Pavan W.J."/>
            <person name="Pavesi G."/>
            <person name="Pesole G."/>
            <person name="Petrovsky N."/>
            <person name="Piazza S."/>
            <person name="Reed J."/>
            <person name="Reid J.F."/>
            <person name="Ring B.Z."/>
            <person name="Ringwald M."/>
            <person name="Rost B."/>
            <person name="Ruan Y."/>
            <person name="Salzberg S.L."/>
            <person name="Sandelin A."/>
            <person name="Schneider C."/>
            <person name="Schoenbach C."/>
            <person name="Sekiguchi K."/>
            <person name="Semple C.A."/>
            <person name="Seno S."/>
            <person name="Sessa L."/>
            <person name="Sheng Y."/>
            <person name="Shibata Y."/>
            <person name="Shimada H."/>
            <person name="Shimada K."/>
            <person name="Silva D."/>
            <person name="Sinclair B."/>
            <person name="Sperling S."/>
            <person name="Stupka E."/>
            <person name="Sugiura K."/>
            <person name="Sultana R."/>
            <person name="Takenaka Y."/>
            <person name="Taki K."/>
            <person name="Tammoja K."/>
            <person name="Tan S.L."/>
            <person name="Tang S."/>
            <person name="Taylor M.S."/>
            <person name="Tegner J."/>
            <person name="Teichmann S.A."/>
            <person name="Ueda H.R."/>
            <person name="van Nimwegen E."/>
            <person name="Verardo R."/>
            <person name="Wei C.L."/>
            <person name="Yagi K."/>
            <person name="Yamanishi H."/>
            <person name="Zabarovsky E."/>
            <person name="Zhu S."/>
            <person name="Zimmer A."/>
            <person name="Hide W."/>
            <person name="Bult C."/>
            <person name="Grimmond S.M."/>
            <person name="Teasdale R.D."/>
            <person name="Liu E.T."/>
            <person name="Brusic V."/>
            <person name="Quackenbush J."/>
            <person name="Wahlestedt C."/>
            <person name="Mattick J.S."/>
            <person name="Hume D.A."/>
            <person name="Kai C."/>
            <person name="Sasaki D."/>
            <person name="Tomaru Y."/>
            <person name="Fukuda S."/>
            <person name="Kanamori-Katayama M."/>
            <person name="Suzuki M."/>
            <person name="Aoki J."/>
            <person name="Arakawa T."/>
            <person name="Iida J."/>
            <person name="Imamura K."/>
            <person name="Itoh M."/>
            <person name="Kato T."/>
            <person name="Kawaji H."/>
            <person name="Kawagashira N."/>
            <person name="Kawashima T."/>
            <person name="Kojima M."/>
            <person name="Kondo S."/>
            <person name="Konno H."/>
            <person name="Nakano K."/>
            <person name="Ninomiya N."/>
            <person name="Nishio T."/>
            <person name="Okada M."/>
            <person name="Plessy C."/>
            <person name="Shibata K."/>
            <person name="Shiraki T."/>
            <person name="Suzuki S."/>
            <person name="Tagami M."/>
            <person name="Waki K."/>
            <person name="Watahiki A."/>
            <person name="Okamura-Oho Y."/>
            <person name="Suzuki H."/>
            <person name="Kawai J."/>
            <person name="Hayashizaki Y."/>
        </authorList>
    </citation>
    <scope>NUCLEOTIDE SEQUENCE [LARGE SCALE MRNA]</scope>
    <source>
        <strain>C57BL/6J</strain>
        <tissue>Pancreas</tissue>
    </source>
</reference>
<reference key="5">
    <citation type="journal article" date="2004" name="Genome Res.">
        <title>The status, quality, and expansion of the NIH full-length cDNA project: the Mammalian Gene Collection (MGC).</title>
        <authorList>
            <consortium name="The MGC Project Team"/>
        </authorList>
    </citation>
    <scope>NUCLEOTIDE SEQUENCE [LARGE SCALE MRNA]</scope>
    <source>
        <strain>C57BL/6J</strain>
        <tissue>Colon</tissue>
        <tissue>Thymus</tissue>
    </source>
</reference>
<reference key="6">
    <citation type="journal article" date="2000" name="J. Immunol.">
        <title>Vitamin D3 up-regulated protein 1 mediates oxidative stress via suppressing the thioredoxin function.</title>
        <authorList>
            <person name="Junn E."/>
            <person name="Han S.H."/>
            <person name="Im J.Y."/>
            <person name="Yang Y."/>
            <person name="Cho E.W."/>
            <person name="Um H.D."/>
            <person name="Kim D.K."/>
            <person name="Lee K.W."/>
            <person name="Han P.L."/>
            <person name="Rhee S.G."/>
            <person name="Choi I."/>
        </authorList>
    </citation>
    <scope>INTERACTION WITH TXNIP</scope>
</reference>
<reference key="7">
    <citation type="journal article" date="2010" name="Cell">
        <title>A tissue-specific atlas of mouse protein phosphorylation and expression.</title>
        <authorList>
            <person name="Huttlin E.L."/>
            <person name="Jedrychowski M.P."/>
            <person name="Elias J.E."/>
            <person name="Goswami T."/>
            <person name="Rad R."/>
            <person name="Beausoleil S.A."/>
            <person name="Villen J."/>
            <person name="Haas W."/>
            <person name="Sowa M.E."/>
            <person name="Gygi S.P."/>
        </authorList>
    </citation>
    <scope>IDENTIFICATION BY MASS SPECTROMETRY [LARGE SCALE ANALYSIS]</scope>
    <source>
        <tissue>Brain</tissue>
        <tissue>Brown adipose tissue</tissue>
        <tissue>Heart</tissue>
        <tissue>Kidney</tissue>
        <tissue>Liver</tissue>
        <tissue>Lung</tissue>
        <tissue>Pancreas</tissue>
        <tissue>Spleen</tissue>
        <tissue>Testis</tissue>
    </source>
</reference>
<reference key="8">
    <citation type="journal article" date="2013" name="Mol. Cell">
        <title>SIRT5-mediated lysine desuccinylation impacts diverse metabolic pathways.</title>
        <authorList>
            <person name="Park J."/>
            <person name="Chen Y."/>
            <person name="Tishkoff D.X."/>
            <person name="Peng C."/>
            <person name="Tan M."/>
            <person name="Dai L."/>
            <person name="Xie Z."/>
            <person name="Zhang Y."/>
            <person name="Zwaans B.M."/>
            <person name="Skinner M.E."/>
            <person name="Lombard D.B."/>
            <person name="Zhao Y."/>
        </authorList>
    </citation>
    <scope>ACETYLATION [LARGE SCALE ANALYSIS] AT LYS-39 AND LYS-94</scope>
    <scope>SUCCINYLATION [LARGE SCALE ANALYSIS] AT LYS-8 AND LYS-94</scope>
    <scope>IDENTIFICATION BY MASS SPECTROMETRY [LARGE SCALE ANALYSIS]</scope>
    <source>
        <tissue>Embryonic fibroblast</tissue>
        <tissue>Liver</tissue>
    </source>
</reference>
<protein>
    <recommendedName>
        <fullName>Thioredoxin</fullName>
        <shortName>Trx</shortName>
    </recommendedName>
    <alternativeName>
        <fullName>ATL-derived factor</fullName>
        <shortName>ADF</shortName>
    </alternativeName>
</protein>